<feature type="chain" id="PRO_1000142690" description="Large ribosomal subunit protein uL18">
    <location>
        <begin position="1"/>
        <end position="120"/>
    </location>
</feature>
<reference key="1">
    <citation type="submission" date="2008-03" db="EMBL/GenBank/DDBJ databases">
        <title>Complete sequence of chromosome of Methylobacterium radiotolerans JCM 2831.</title>
        <authorList>
            <consortium name="US DOE Joint Genome Institute"/>
            <person name="Copeland A."/>
            <person name="Lucas S."/>
            <person name="Lapidus A."/>
            <person name="Glavina del Rio T."/>
            <person name="Dalin E."/>
            <person name="Tice H."/>
            <person name="Bruce D."/>
            <person name="Goodwin L."/>
            <person name="Pitluck S."/>
            <person name="Kiss H."/>
            <person name="Brettin T."/>
            <person name="Detter J.C."/>
            <person name="Han C."/>
            <person name="Kuske C.R."/>
            <person name="Schmutz J."/>
            <person name="Larimer F."/>
            <person name="Land M."/>
            <person name="Hauser L."/>
            <person name="Kyrpides N."/>
            <person name="Mikhailova N."/>
            <person name="Marx C.J."/>
            <person name="Richardson P."/>
        </authorList>
    </citation>
    <scope>NUCLEOTIDE SEQUENCE [LARGE SCALE GENOMIC DNA]</scope>
    <source>
        <strain>ATCC 27329 / DSM 1819 / JCM 2831 / NBRC 15690 / NCIMB 10815 / 0-1</strain>
    </source>
</reference>
<gene>
    <name evidence="1" type="primary">rplR</name>
    <name type="ordered locus">Mrad2831_2202</name>
</gene>
<protein>
    <recommendedName>
        <fullName evidence="1">Large ribosomal subunit protein uL18</fullName>
    </recommendedName>
    <alternativeName>
        <fullName evidence="2">50S ribosomal protein L18</fullName>
    </alternativeName>
</protein>
<sequence>MSRKLEALDRRKARVRRALRAAANGRPRLSVFRSSKQIYVQVIDDVAGKTLASASSIDKALKGELKTGADVAAATAVGKLVAERAKAAGVTKVIFDRSGYIYHGRVKAVAEAAREGGLEF</sequence>
<name>RL18_METRJ</name>
<accession>B1LWR0</accession>
<keyword id="KW-0687">Ribonucleoprotein</keyword>
<keyword id="KW-0689">Ribosomal protein</keyword>
<keyword id="KW-0694">RNA-binding</keyword>
<keyword id="KW-0699">rRNA-binding</keyword>
<organism>
    <name type="scientific">Methylobacterium radiotolerans (strain ATCC 27329 / DSM 1819 / JCM 2831 / NBRC 15690 / NCIMB 10815 / 0-1)</name>
    <dbReference type="NCBI Taxonomy" id="426355"/>
    <lineage>
        <taxon>Bacteria</taxon>
        <taxon>Pseudomonadati</taxon>
        <taxon>Pseudomonadota</taxon>
        <taxon>Alphaproteobacteria</taxon>
        <taxon>Hyphomicrobiales</taxon>
        <taxon>Methylobacteriaceae</taxon>
        <taxon>Methylobacterium</taxon>
    </lineage>
</organism>
<comment type="function">
    <text evidence="1">This is one of the proteins that bind and probably mediate the attachment of the 5S RNA into the large ribosomal subunit, where it forms part of the central protuberance.</text>
</comment>
<comment type="subunit">
    <text evidence="1">Part of the 50S ribosomal subunit; part of the 5S rRNA/L5/L18/L25 subcomplex. Contacts the 5S and 23S rRNAs.</text>
</comment>
<comment type="similarity">
    <text evidence="1">Belongs to the universal ribosomal protein uL18 family.</text>
</comment>
<evidence type="ECO:0000255" key="1">
    <source>
        <dbReference type="HAMAP-Rule" id="MF_01337"/>
    </source>
</evidence>
<evidence type="ECO:0000305" key="2"/>
<proteinExistence type="inferred from homology"/>
<dbReference type="EMBL" id="CP001001">
    <property type="protein sequence ID" value="ACB24197.1"/>
    <property type="molecule type" value="Genomic_DNA"/>
</dbReference>
<dbReference type="RefSeq" id="WP_012319174.1">
    <property type="nucleotide sequence ID" value="NC_010505.1"/>
</dbReference>
<dbReference type="SMR" id="B1LWR0"/>
<dbReference type="STRING" id="426355.Mrad2831_2202"/>
<dbReference type="GeneID" id="6138234"/>
<dbReference type="KEGG" id="mrd:Mrad2831_2202"/>
<dbReference type="eggNOG" id="COG0256">
    <property type="taxonomic scope" value="Bacteria"/>
</dbReference>
<dbReference type="HOGENOM" id="CLU_098841_0_1_5"/>
<dbReference type="OrthoDB" id="9810939at2"/>
<dbReference type="Proteomes" id="UP000006589">
    <property type="component" value="Chromosome"/>
</dbReference>
<dbReference type="GO" id="GO:0022625">
    <property type="term" value="C:cytosolic large ribosomal subunit"/>
    <property type="evidence" value="ECO:0007669"/>
    <property type="project" value="TreeGrafter"/>
</dbReference>
<dbReference type="GO" id="GO:0008097">
    <property type="term" value="F:5S rRNA binding"/>
    <property type="evidence" value="ECO:0007669"/>
    <property type="project" value="TreeGrafter"/>
</dbReference>
<dbReference type="GO" id="GO:0003735">
    <property type="term" value="F:structural constituent of ribosome"/>
    <property type="evidence" value="ECO:0007669"/>
    <property type="project" value="InterPro"/>
</dbReference>
<dbReference type="GO" id="GO:0006412">
    <property type="term" value="P:translation"/>
    <property type="evidence" value="ECO:0007669"/>
    <property type="project" value="UniProtKB-UniRule"/>
</dbReference>
<dbReference type="CDD" id="cd00432">
    <property type="entry name" value="Ribosomal_L18_L5e"/>
    <property type="match status" value="1"/>
</dbReference>
<dbReference type="FunFam" id="3.30.420.100:FF:000001">
    <property type="entry name" value="50S ribosomal protein L18"/>
    <property type="match status" value="1"/>
</dbReference>
<dbReference type="Gene3D" id="3.30.420.100">
    <property type="match status" value="1"/>
</dbReference>
<dbReference type="HAMAP" id="MF_01337_B">
    <property type="entry name" value="Ribosomal_uL18_B"/>
    <property type="match status" value="1"/>
</dbReference>
<dbReference type="InterPro" id="IPR004389">
    <property type="entry name" value="Ribosomal_uL18_bac-type"/>
</dbReference>
<dbReference type="InterPro" id="IPR005484">
    <property type="entry name" value="Ribosomal_uL18_bac/euk"/>
</dbReference>
<dbReference type="NCBIfam" id="TIGR00060">
    <property type="entry name" value="L18_bact"/>
    <property type="match status" value="1"/>
</dbReference>
<dbReference type="PANTHER" id="PTHR12899">
    <property type="entry name" value="39S RIBOSOMAL PROTEIN L18, MITOCHONDRIAL"/>
    <property type="match status" value="1"/>
</dbReference>
<dbReference type="PANTHER" id="PTHR12899:SF3">
    <property type="entry name" value="LARGE RIBOSOMAL SUBUNIT PROTEIN UL18M"/>
    <property type="match status" value="1"/>
</dbReference>
<dbReference type="Pfam" id="PF00861">
    <property type="entry name" value="Ribosomal_L18p"/>
    <property type="match status" value="1"/>
</dbReference>
<dbReference type="SUPFAM" id="SSF53137">
    <property type="entry name" value="Translational machinery components"/>
    <property type="match status" value="1"/>
</dbReference>